<dbReference type="EMBL" id="CP000247">
    <property type="protein sequence ID" value="ABG71877.1"/>
    <property type="molecule type" value="Genomic_DNA"/>
</dbReference>
<dbReference type="RefSeq" id="WP_000378258.1">
    <property type="nucleotide sequence ID" value="NC_008253.1"/>
</dbReference>
<dbReference type="SMR" id="Q0TB02"/>
<dbReference type="GeneID" id="93778448"/>
<dbReference type="KEGG" id="ecp:ECP_3906"/>
<dbReference type="HOGENOM" id="CLU_016535_3_0_6"/>
<dbReference type="Proteomes" id="UP000009182">
    <property type="component" value="Chromosome"/>
</dbReference>
<dbReference type="GO" id="GO:0005886">
    <property type="term" value="C:plasma membrane"/>
    <property type="evidence" value="ECO:0007669"/>
    <property type="project" value="UniProtKB-SubCell"/>
</dbReference>
<dbReference type="GO" id="GO:0032977">
    <property type="term" value="F:membrane insertase activity"/>
    <property type="evidence" value="ECO:0007669"/>
    <property type="project" value="InterPro"/>
</dbReference>
<dbReference type="GO" id="GO:0051205">
    <property type="term" value="P:protein insertion into membrane"/>
    <property type="evidence" value="ECO:0007669"/>
    <property type="project" value="TreeGrafter"/>
</dbReference>
<dbReference type="GO" id="GO:0015031">
    <property type="term" value="P:protein transport"/>
    <property type="evidence" value="ECO:0007669"/>
    <property type="project" value="UniProtKB-KW"/>
</dbReference>
<dbReference type="CDD" id="cd20070">
    <property type="entry name" value="5TM_YidC_Alb3"/>
    <property type="match status" value="1"/>
</dbReference>
<dbReference type="CDD" id="cd19961">
    <property type="entry name" value="EcYidC-like_peri"/>
    <property type="match status" value="1"/>
</dbReference>
<dbReference type="FunFam" id="2.70.98.90:FF:000001">
    <property type="entry name" value="Membrane protein insertase YidC"/>
    <property type="match status" value="1"/>
</dbReference>
<dbReference type="Gene3D" id="2.70.98.90">
    <property type="match status" value="1"/>
</dbReference>
<dbReference type="HAMAP" id="MF_01810">
    <property type="entry name" value="YidC_type1"/>
    <property type="match status" value="1"/>
</dbReference>
<dbReference type="InterPro" id="IPR019998">
    <property type="entry name" value="Membr_insert_YidC"/>
</dbReference>
<dbReference type="InterPro" id="IPR028053">
    <property type="entry name" value="Membr_insert_YidC_N"/>
</dbReference>
<dbReference type="InterPro" id="IPR001708">
    <property type="entry name" value="YidC/ALB3/OXA1/COX18"/>
</dbReference>
<dbReference type="InterPro" id="IPR028055">
    <property type="entry name" value="YidC/Oxa/ALB_C"/>
</dbReference>
<dbReference type="InterPro" id="IPR047196">
    <property type="entry name" value="YidC_ALB_C"/>
</dbReference>
<dbReference type="InterPro" id="IPR038221">
    <property type="entry name" value="YidC_periplasmic_sf"/>
</dbReference>
<dbReference type="NCBIfam" id="NF002351">
    <property type="entry name" value="PRK01318.1-1"/>
    <property type="match status" value="1"/>
</dbReference>
<dbReference type="NCBIfam" id="NF002352">
    <property type="entry name" value="PRK01318.1-3"/>
    <property type="match status" value="1"/>
</dbReference>
<dbReference type="NCBIfam" id="NF002353">
    <property type="entry name" value="PRK01318.1-4"/>
    <property type="match status" value="1"/>
</dbReference>
<dbReference type="NCBIfam" id="TIGR03593">
    <property type="entry name" value="yidC_nterm"/>
    <property type="match status" value="1"/>
</dbReference>
<dbReference type="NCBIfam" id="TIGR03592">
    <property type="entry name" value="yidC_oxa1_cterm"/>
    <property type="match status" value="1"/>
</dbReference>
<dbReference type="PANTHER" id="PTHR12428:SF65">
    <property type="entry name" value="CYTOCHROME C OXIDASE ASSEMBLY PROTEIN COX18, MITOCHONDRIAL"/>
    <property type="match status" value="1"/>
</dbReference>
<dbReference type="PANTHER" id="PTHR12428">
    <property type="entry name" value="OXA1"/>
    <property type="match status" value="1"/>
</dbReference>
<dbReference type="Pfam" id="PF02096">
    <property type="entry name" value="60KD_IMP"/>
    <property type="match status" value="1"/>
</dbReference>
<dbReference type="Pfam" id="PF14849">
    <property type="entry name" value="YidC_periplas"/>
    <property type="match status" value="1"/>
</dbReference>
<dbReference type="PRINTS" id="PR00701">
    <property type="entry name" value="60KDINNERMP"/>
</dbReference>
<dbReference type="PRINTS" id="PR01900">
    <property type="entry name" value="YIDCPROTEIN"/>
</dbReference>
<comment type="function">
    <text evidence="1">Required for the insertion and/or proper folding and/or complex formation of integral membrane proteins into the membrane. Involved in integration of membrane proteins that insert both dependently and independently of the Sec translocase complex, as well as at least some lipoproteins. Aids folding of multispanning membrane proteins.</text>
</comment>
<comment type="subunit">
    <text evidence="1">Interacts with the Sec translocase complex via SecD. Specifically interacts with transmembrane segments of nascent integral membrane proteins during membrane integration.</text>
</comment>
<comment type="subcellular location">
    <subcellularLocation>
        <location evidence="1">Cell inner membrane</location>
        <topology evidence="1">Multi-pass membrane protein</topology>
    </subcellularLocation>
</comment>
<comment type="similarity">
    <text evidence="1">Belongs to the OXA1/ALB3/YidC family. Type 1 subfamily.</text>
</comment>
<proteinExistence type="inferred from homology"/>
<sequence length="548" mass="61540">MDSQRNLLVIALLFVSFMIWQAWEQDKNPQPQAQQTTQTTTTAAGSAADQGVPASGQGKLISVKTDVLDLTINTRGGDVEQALLPAYPKELNSTQPFQLLETSPQFIYQAQSGLTGRDGPDNPANGPRPLYNVEKDAYVLAEGQNELQVPMTYTDAAGNTFTKTFVLKRGDYAVNVNYNVQNAGEKPLEISTFGQLKQSITLPPHLDTGSSNFALHTFRGAAYSTPDEKYEKYKFDTIADNENLNISSKGGWVAMLQQYFATAWIPHNDGTNNFYTANLGNGIAAIGYKSQPVLVQPGQTGAMNSTLWVGPEIQDKMAAVAPHLDLTVDYGWLWFISQPLFKLLKWIHSFVGNWGFSIIIITFIVRGIMYPLTKAQYTSMAKMRMLQPKIQAMRERLGDDKQRISQEMMALYKAEKVNPLGGCFPLLIQMPIFLALYYMLMGSVELRQAPFALWIHDLSAQDPYYILPILMGVTMFFIQKMSPTTVTDPMQQKIMTFMPVIFTVFFLWFPSGLVLYYIVSNLVTIIQQQLIYRGLEKRGLHSREKKKS</sequence>
<organism>
    <name type="scientific">Escherichia coli O6:K15:H31 (strain 536 / UPEC)</name>
    <dbReference type="NCBI Taxonomy" id="362663"/>
    <lineage>
        <taxon>Bacteria</taxon>
        <taxon>Pseudomonadati</taxon>
        <taxon>Pseudomonadota</taxon>
        <taxon>Gammaproteobacteria</taxon>
        <taxon>Enterobacterales</taxon>
        <taxon>Enterobacteriaceae</taxon>
        <taxon>Escherichia</taxon>
    </lineage>
</organism>
<reference key="1">
    <citation type="journal article" date="2006" name="Mol. Microbiol.">
        <title>Role of pathogenicity island-associated integrases in the genome plasticity of uropathogenic Escherichia coli strain 536.</title>
        <authorList>
            <person name="Hochhut B."/>
            <person name="Wilde C."/>
            <person name="Balling G."/>
            <person name="Middendorf B."/>
            <person name="Dobrindt U."/>
            <person name="Brzuszkiewicz E."/>
            <person name="Gottschalk G."/>
            <person name="Carniel E."/>
            <person name="Hacker J."/>
        </authorList>
    </citation>
    <scope>NUCLEOTIDE SEQUENCE [LARGE SCALE GENOMIC DNA]</scope>
    <source>
        <strain>536 / UPEC</strain>
    </source>
</reference>
<protein>
    <recommendedName>
        <fullName evidence="1">Membrane protein insertase YidC</fullName>
    </recommendedName>
    <alternativeName>
        <fullName evidence="1">Foldase YidC</fullName>
    </alternativeName>
    <alternativeName>
        <fullName evidence="1">Membrane integrase YidC</fullName>
    </alternativeName>
    <alternativeName>
        <fullName evidence="1">Membrane protein YidC</fullName>
    </alternativeName>
</protein>
<feature type="chain" id="PRO_1000070088" description="Membrane protein insertase YidC">
    <location>
        <begin position="1"/>
        <end position="548"/>
    </location>
</feature>
<feature type="transmembrane region" description="Helical" evidence="1">
    <location>
        <begin position="6"/>
        <end position="26"/>
    </location>
</feature>
<feature type="transmembrane region" description="Helical" evidence="1">
    <location>
        <begin position="350"/>
        <end position="370"/>
    </location>
</feature>
<feature type="transmembrane region" description="Helical" evidence="1">
    <location>
        <begin position="420"/>
        <end position="440"/>
    </location>
</feature>
<feature type="transmembrane region" description="Helical" evidence="1">
    <location>
        <begin position="458"/>
        <end position="478"/>
    </location>
</feature>
<feature type="transmembrane region" description="Helical" evidence="1">
    <location>
        <begin position="499"/>
        <end position="519"/>
    </location>
</feature>
<feature type="region of interest" description="Disordered" evidence="2">
    <location>
        <begin position="28"/>
        <end position="55"/>
    </location>
</feature>
<feature type="compositionally biased region" description="Low complexity" evidence="2">
    <location>
        <begin position="30"/>
        <end position="50"/>
    </location>
</feature>
<keyword id="KW-0997">Cell inner membrane</keyword>
<keyword id="KW-1003">Cell membrane</keyword>
<keyword id="KW-0143">Chaperone</keyword>
<keyword id="KW-0472">Membrane</keyword>
<keyword id="KW-0653">Protein transport</keyword>
<keyword id="KW-0812">Transmembrane</keyword>
<keyword id="KW-1133">Transmembrane helix</keyword>
<keyword id="KW-0813">Transport</keyword>
<accession>Q0TB02</accession>
<gene>
    <name evidence="1" type="primary">yidC</name>
    <name type="ordered locus">ECP_3906</name>
</gene>
<evidence type="ECO:0000255" key="1">
    <source>
        <dbReference type="HAMAP-Rule" id="MF_01810"/>
    </source>
</evidence>
<evidence type="ECO:0000256" key="2">
    <source>
        <dbReference type="SAM" id="MobiDB-lite"/>
    </source>
</evidence>
<name>YIDC_ECOL5</name>